<proteinExistence type="inferred from homology"/>
<sequence length="134" mass="14844">MNTLNLDIVTPNGSVYNRDNVELVVMQTTAGEIGVMSGHIPTVAALKTGFVKVKFHDGTEYIAVSDGFVEVRKDKVSIIVQTAETAREIDVERAKLAKARAESHLENDDDNTDIHRAERALERANNRLRVAELK</sequence>
<accession>Q2YUK2</accession>
<gene>
    <name evidence="1" type="primary">atpC</name>
    <name type="ordered locus">SAB1986c</name>
</gene>
<comment type="function">
    <text evidence="1">Produces ATP from ADP in the presence of a proton gradient across the membrane.</text>
</comment>
<comment type="subunit">
    <text>F-type ATPases have 2 components, CF(1) - the catalytic core - and CF(0) - the membrane proton channel. CF(1) has five subunits: alpha(3), beta(3), gamma(1), delta(1), epsilon(1). CF(0) has three main subunits: a, b and c.</text>
</comment>
<comment type="subcellular location">
    <subcellularLocation>
        <location evidence="1">Cell membrane</location>
        <topology evidence="1">Peripheral membrane protein</topology>
    </subcellularLocation>
</comment>
<comment type="similarity">
    <text evidence="1">Belongs to the ATPase epsilon chain family.</text>
</comment>
<dbReference type="EMBL" id="AJ938182">
    <property type="protein sequence ID" value="CAI81675.1"/>
    <property type="molecule type" value="Genomic_DNA"/>
</dbReference>
<dbReference type="RefSeq" id="WP_001094394.1">
    <property type="nucleotide sequence ID" value="NC_007622.1"/>
</dbReference>
<dbReference type="SMR" id="Q2YUK2"/>
<dbReference type="KEGG" id="sab:SAB1986c"/>
<dbReference type="HOGENOM" id="CLU_084338_1_3_9"/>
<dbReference type="GO" id="GO:0005886">
    <property type="term" value="C:plasma membrane"/>
    <property type="evidence" value="ECO:0007669"/>
    <property type="project" value="UniProtKB-SubCell"/>
</dbReference>
<dbReference type="GO" id="GO:0045259">
    <property type="term" value="C:proton-transporting ATP synthase complex"/>
    <property type="evidence" value="ECO:0007669"/>
    <property type="project" value="UniProtKB-KW"/>
</dbReference>
<dbReference type="GO" id="GO:0005524">
    <property type="term" value="F:ATP binding"/>
    <property type="evidence" value="ECO:0007669"/>
    <property type="project" value="UniProtKB-UniRule"/>
</dbReference>
<dbReference type="GO" id="GO:0046933">
    <property type="term" value="F:proton-transporting ATP synthase activity, rotational mechanism"/>
    <property type="evidence" value="ECO:0007669"/>
    <property type="project" value="UniProtKB-UniRule"/>
</dbReference>
<dbReference type="CDD" id="cd12152">
    <property type="entry name" value="F1-ATPase_delta"/>
    <property type="match status" value="1"/>
</dbReference>
<dbReference type="FunFam" id="1.20.5.440:FF:000001">
    <property type="entry name" value="ATP synthase epsilon chain"/>
    <property type="match status" value="1"/>
</dbReference>
<dbReference type="FunFam" id="2.60.15.10:FF:000001">
    <property type="entry name" value="ATP synthase epsilon chain"/>
    <property type="match status" value="1"/>
</dbReference>
<dbReference type="Gene3D" id="1.20.5.440">
    <property type="entry name" value="ATP synthase delta/epsilon subunit, C-terminal domain"/>
    <property type="match status" value="1"/>
</dbReference>
<dbReference type="Gene3D" id="2.60.15.10">
    <property type="entry name" value="F0F1 ATP synthase delta/epsilon subunit, N-terminal"/>
    <property type="match status" value="1"/>
</dbReference>
<dbReference type="HAMAP" id="MF_00530">
    <property type="entry name" value="ATP_synth_epsil_bac"/>
    <property type="match status" value="1"/>
</dbReference>
<dbReference type="InterPro" id="IPR036794">
    <property type="entry name" value="ATP_F1_dsu/esu_C_sf"/>
</dbReference>
<dbReference type="InterPro" id="IPR001469">
    <property type="entry name" value="ATP_synth_F1_dsu/esu"/>
</dbReference>
<dbReference type="InterPro" id="IPR020546">
    <property type="entry name" value="ATP_synth_F1_dsu/esu_N"/>
</dbReference>
<dbReference type="InterPro" id="IPR020547">
    <property type="entry name" value="ATP_synth_F1_esu_C"/>
</dbReference>
<dbReference type="InterPro" id="IPR036771">
    <property type="entry name" value="ATPsynth_dsu/esu_N"/>
</dbReference>
<dbReference type="NCBIfam" id="TIGR01216">
    <property type="entry name" value="ATP_synt_epsi"/>
    <property type="match status" value="1"/>
</dbReference>
<dbReference type="NCBIfam" id="NF001846">
    <property type="entry name" value="PRK00571.1-3"/>
    <property type="match status" value="1"/>
</dbReference>
<dbReference type="NCBIfam" id="NF009980">
    <property type="entry name" value="PRK13446.1"/>
    <property type="match status" value="1"/>
</dbReference>
<dbReference type="PANTHER" id="PTHR13822">
    <property type="entry name" value="ATP SYNTHASE DELTA/EPSILON CHAIN"/>
    <property type="match status" value="1"/>
</dbReference>
<dbReference type="PANTHER" id="PTHR13822:SF10">
    <property type="entry name" value="ATP SYNTHASE EPSILON CHAIN, CHLOROPLASTIC"/>
    <property type="match status" value="1"/>
</dbReference>
<dbReference type="Pfam" id="PF00401">
    <property type="entry name" value="ATP-synt_DE"/>
    <property type="match status" value="1"/>
</dbReference>
<dbReference type="Pfam" id="PF02823">
    <property type="entry name" value="ATP-synt_DE_N"/>
    <property type="match status" value="1"/>
</dbReference>
<dbReference type="SUPFAM" id="SSF46604">
    <property type="entry name" value="Epsilon subunit of F1F0-ATP synthase C-terminal domain"/>
    <property type="match status" value="1"/>
</dbReference>
<dbReference type="SUPFAM" id="SSF51344">
    <property type="entry name" value="Epsilon subunit of F1F0-ATP synthase N-terminal domain"/>
    <property type="match status" value="1"/>
</dbReference>
<feature type="chain" id="PRO_0000265898" description="ATP synthase epsilon chain">
    <location>
        <begin position="1"/>
        <end position="134"/>
    </location>
</feature>
<organism>
    <name type="scientific">Staphylococcus aureus (strain bovine RF122 / ET3-1)</name>
    <dbReference type="NCBI Taxonomy" id="273036"/>
    <lineage>
        <taxon>Bacteria</taxon>
        <taxon>Bacillati</taxon>
        <taxon>Bacillota</taxon>
        <taxon>Bacilli</taxon>
        <taxon>Bacillales</taxon>
        <taxon>Staphylococcaceae</taxon>
        <taxon>Staphylococcus</taxon>
    </lineage>
</organism>
<protein>
    <recommendedName>
        <fullName evidence="1">ATP synthase epsilon chain</fullName>
    </recommendedName>
    <alternativeName>
        <fullName evidence="1">ATP synthase F1 sector epsilon subunit</fullName>
    </alternativeName>
    <alternativeName>
        <fullName evidence="1">F-ATPase epsilon subunit</fullName>
    </alternativeName>
</protein>
<keyword id="KW-0066">ATP synthesis</keyword>
<keyword id="KW-1003">Cell membrane</keyword>
<keyword id="KW-0139">CF(1)</keyword>
<keyword id="KW-0375">Hydrogen ion transport</keyword>
<keyword id="KW-0406">Ion transport</keyword>
<keyword id="KW-0472">Membrane</keyword>
<keyword id="KW-0813">Transport</keyword>
<reference key="1">
    <citation type="journal article" date="2007" name="PLoS ONE">
        <title>Molecular correlates of host specialization in Staphylococcus aureus.</title>
        <authorList>
            <person name="Herron-Olson L."/>
            <person name="Fitzgerald J.R."/>
            <person name="Musser J.M."/>
            <person name="Kapur V."/>
        </authorList>
    </citation>
    <scope>NUCLEOTIDE SEQUENCE [LARGE SCALE GENOMIC DNA]</scope>
    <source>
        <strain>bovine RF122 / ET3-1</strain>
    </source>
</reference>
<evidence type="ECO:0000255" key="1">
    <source>
        <dbReference type="HAMAP-Rule" id="MF_00530"/>
    </source>
</evidence>
<name>ATPE_STAAB</name>